<keyword id="KW-0238">DNA-binding</keyword>
<keyword id="KW-0479">Metal-binding</keyword>
<keyword id="KW-0539">Nucleus</keyword>
<keyword id="KW-0675">Receptor</keyword>
<keyword id="KW-1185">Reference proteome</keyword>
<keyword id="KW-0804">Transcription</keyword>
<keyword id="KW-0805">Transcription regulation</keyword>
<keyword id="KW-0862">Zinc</keyword>
<keyword id="KW-0863">Zinc-finger</keyword>
<organism>
    <name type="scientific">Caenorhabditis elegans</name>
    <dbReference type="NCBI Taxonomy" id="6239"/>
    <lineage>
        <taxon>Eukaryota</taxon>
        <taxon>Metazoa</taxon>
        <taxon>Ecdysozoa</taxon>
        <taxon>Nematoda</taxon>
        <taxon>Chromadorea</taxon>
        <taxon>Rhabditida</taxon>
        <taxon>Rhabditina</taxon>
        <taxon>Rhabditomorpha</taxon>
        <taxon>Rhabditoidea</taxon>
        <taxon>Rhabditidae</taxon>
        <taxon>Peloderinae</taxon>
        <taxon>Caenorhabditis</taxon>
    </lineage>
</organism>
<protein>
    <recommendedName>
        <fullName>Nuclear hormone receptor family member nhr-67</fullName>
    </recommendedName>
</protein>
<sequence>MMTAVSQMSVPSSRILLDVDCRVCEDHSSGKHYSIFSCDGCAGFFKRSIRRHRQYVCKNKGSPSEGQCKVDKTHRNQCRACRLRKCLEIGMNKDAVQHERGPRNSSLRRQQMMFDHGSSPNSPEMGSESDAIILPTSSMNRDTVAGTAARIFFALVGFCQNPLNGVPKERQMTMFQQNWAALLVLHATETRAITSKQIRTETISGSSEQRNAVANAFEIIERLQLDNREYMMLKHFTMWRDTPSAIQIVFQLASIQNFTHRTEPTRYIQCINAIAAIPTTSIIDVLFRPSIGSASMPRLIQDMFKPPQQPTPTSLFPMANFNLNFLLKQEKTETEEGEDIEEEDDATSSNQFDENSSTDDRSVGELDPVQLFLALNSSTQPSSASSPSSSRPRHSIRSITELLSIQEEESVNVEEV</sequence>
<dbReference type="EMBL" id="Z73103">
    <property type="protein sequence ID" value="CAA97428.1"/>
    <property type="molecule type" value="Genomic_DNA"/>
</dbReference>
<dbReference type="PIR" id="T19102">
    <property type="entry name" value="T19102"/>
</dbReference>
<dbReference type="RefSeq" id="NP_502094.1">
    <property type="nucleotide sequence ID" value="NM_069693.5"/>
</dbReference>
<dbReference type="SMR" id="Q9XVV3"/>
<dbReference type="BioGRID" id="43123">
    <property type="interactions" value="34"/>
</dbReference>
<dbReference type="DIP" id="DIP-25535N"/>
<dbReference type="FunCoup" id="Q9XVV3">
    <property type="interactions" value="127"/>
</dbReference>
<dbReference type="IntAct" id="Q9XVV3">
    <property type="interactions" value="33"/>
</dbReference>
<dbReference type="STRING" id="6239.C08F8.8.1"/>
<dbReference type="PaxDb" id="6239-C08F8.8"/>
<dbReference type="EnsemblMetazoa" id="C08F8.8.1">
    <property type="protein sequence ID" value="C08F8.8.1"/>
    <property type="gene ID" value="WBGene00003657"/>
</dbReference>
<dbReference type="GeneID" id="178024"/>
<dbReference type="KEGG" id="cel:CELE_C08F8.8"/>
<dbReference type="UCSC" id="C08F8.8">
    <property type="organism name" value="c. elegans"/>
</dbReference>
<dbReference type="AGR" id="WB:WBGene00003657"/>
<dbReference type="CTD" id="178024"/>
<dbReference type="WormBase" id="C08F8.8">
    <property type="protein sequence ID" value="CE18491"/>
    <property type="gene ID" value="WBGene00003657"/>
    <property type="gene designation" value="nhr-67"/>
</dbReference>
<dbReference type="eggNOG" id="KOG3575">
    <property type="taxonomic scope" value="Eukaryota"/>
</dbReference>
<dbReference type="HOGENOM" id="CLU_055512_0_0_1"/>
<dbReference type="InParanoid" id="Q9XVV3"/>
<dbReference type="OMA" id="RYISCMV"/>
<dbReference type="OrthoDB" id="5771769at2759"/>
<dbReference type="PhylomeDB" id="Q9XVV3"/>
<dbReference type="Reactome" id="R-CEL-383280">
    <property type="pathway name" value="Nuclear Receptor transcription pathway"/>
</dbReference>
<dbReference type="SignaLink" id="Q9XVV3"/>
<dbReference type="PRO" id="PR:Q9XVV3"/>
<dbReference type="Proteomes" id="UP000001940">
    <property type="component" value="Chromosome IV"/>
</dbReference>
<dbReference type="Bgee" id="WBGene00003657">
    <property type="expression patterns" value="Expressed in pharyngeal muscle cell (C elegans) and 3 other cell types or tissues"/>
</dbReference>
<dbReference type="GO" id="GO:0005634">
    <property type="term" value="C:nucleus"/>
    <property type="evidence" value="ECO:0000314"/>
    <property type="project" value="WormBase"/>
</dbReference>
<dbReference type="GO" id="GO:0003700">
    <property type="term" value="F:DNA-binding transcription factor activity"/>
    <property type="evidence" value="ECO:0000314"/>
    <property type="project" value="WormBase"/>
</dbReference>
<dbReference type="GO" id="GO:0004879">
    <property type="term" value="F:nuclear receptor activity"/>
    <property type="evidence" value="ECO:0000318"/>
    <property type="project" value="GO_Central"/>
</dbReference>
<dbReference type="GO" id="GO:0000978">
    <property type="term" value="F:RNA polymerase II cis-regulatory region sequence-specific DNA binding"/>
    <property type="evidence" value="ECO:0000318"/>
    <property type="project" value="GO_Central"/>
</dbReference>
<dbReference type="GO" id="GO:0000977">
    <property type="term" value="F:RNA polymerase II transcription regulatory region sequence-specific DNA binding"/>
    <property type="evidence" value="ECO:0000314"/>
    <property type="project" value="WormBase"/>
</dbReference>
<dbReference type="GO" id="GO:0043565">
    <property type="term" value="F:sequence-specific DNA binding"/>
    <property type="evidence" value="ECO:0000314"/>
    <property type="project" value="WormBase"/>
</dbReference>
<dbReference type="GO" id="GO:0008270">
    <property type="term" value="F:zinc ion binding"/>
    <property type="evidence" value="ECO:0007669"/>
    <property type="project" value="UniProtKB-KW"/>
</dbReference>
<dbReference type="GO" id="GO:0030154">
    <property type="term" value="P:cell differentiation"/>
    <property type="evidence" value="ECO:0000315"/>
    <property type="project" value="WormBase"/>
</dbReference>
<dbReference type="GO" id="GO:0016477">
    <property type="term" value="P:cell migration"/>
    <property type="evidence" value="ECO:0000315"/>
    <property type="project" value="UniProtKB"/>
</dbReference>
<dbReference type="GO" id="GO:0035262">
    <property type="term" value="P:gonad morphogenesis"/>
    <property type="evidence" value="ECO:0000315"/>
    <property type="project" value="WormBase"/>
</dbReference>
<dbReference type="GO" id="GO:2000134">
    <property type="term" value="P:negative regulation of G1/S transition of mitotic cell cycle"/>
    <property type="evidence" value="ECO:0000315"/>
    <property type="project" value="WormBase"/>
</dbReference>
<dbReference type="GO" id="GO:0045944">
    <property type="term" value="P:positive regulation of transcription by RNA polymerase II"/>
    <property type="evidence" value="ECO:0000314"/>
    <property type="project" value="WormBase"/>
</dbReference>
<dbReference type="GO" id="GO:0012501">
    <property type="term" value="P:programmed cell death"/>
    <property type="evidence" value="ECO:0000315"/>
    <property type="project" value="UniProtKB"/>
</dbReference>
<dbReference type="GO" id="GO:0030334">
    <property type="term" value="P:regulation of cell migration"/>
    <property type="evidence" value="ECO:0000315"/>
    <property type="project" value="WormBase"/>
</dbReference>
<dbReference type="FunFam" id="3.30.50.10:FF:000019">
    <property type="entry name" value="Nuclear receptor subfamily 2 group E member"/>
    <property type="match status" value="1"/>
</dbReference>
<dbReference type="Gene3D" id="3.30.50.10">
    <property type="entry name" value="Erythroid Transcription Factor GATA-1, subunit A"/>
    <property type="match status" value="1"/>
</dbReference>
<dbReference type="Gene3D" id="1.10.565.10">
    <property type="entry name" value="Retinoid X Receptor"/>
    <property type="match status" value="1"/>
</dbReference>
<dbReference type="InterPro" id="IPR035500">
    <property type="entry name" value="NHR-like_dom_sf"/>
</dbReference>
<dbReference type="InterPro" id="IPR050274">
    <property type="entry name" value="Nuclear_hormone_rcpt_NR2"/>
</dbReference>
<dbReference type="InterPro" id="IPR001628">
    <property type="entry name" value="Znf_hrmn_rcpt"/>
</dbReference>
<dbReference type="InterPro" id="IPR013088">
    <property type="entry name" value="Znf_NHR/GATA"/>
</dbReference>
<dbReference type="PANTHER" id="PTHR24083">
    <property type="entry name" value="NUCLEAR HORMONE RECEPTOR"/>
    <property type="match status" value="1"/>
</dbReference>
<dbReference type="Pfam" id="PF00105">
    <property type="entry name" value="zf-C4"/>
    <property type="match status" value="1"/>
</dbReference>
<dbReference type="PRINTS" id="PR00047">
    <property type="entry name" value="STROIDFINGER"/>
</dbReference>
<dbReference type="SMART" id="SM00399">
    <property type="entry name" value="ZnF_C4"/>
    <property type="match status" value="1"/>
</dbReference>
<dbReference type="SUPFAM" id="SSF57716">
    <property type="entry name" value="Glucocorticoid receptor-like (DNA-binding domain)"/>
    <property type="match status" value="1"/>
</dbReference>
<dbReference type="SUPFAM" id="SSF48508">
    <property type="entry name" value="Nuclear receptor ligand-binding domain"/>
    <property type="match status" value="1"/>
</dbReference>
<dbReference type="PROSITE" id="PS00031">
    <property type="entry name" value="NUCLEAR_REC_DBD_1"/>
    <property type="match status" value="1"/>
</dbReference>
<dbReference type="PROSITE" id="PS51030">
    <property type="entry name" value="NUCLEAR_REC_DBD_2"/>
    <property type="match status" value="1"/>
</dbReference>
<proteinExistence type="evidence at protein level"/>
<feature type="chain" id="PRO_0000053794" description="Nuclear hormone receptor family member nhr-67">
    <location>
        <begin position="1"/>
        <end position="416"/>
    </location>
</feature>
<feature type="DNA-binding region" description="Nuclear receptor" evidence="1">
    <location>
        <begin position="18"/>
        <end position="98"/>
    </location>
</feature>
<feature type="zinc finger region" description="NR C4-type" evidence="1">
    <location>
        <begin position="21"/>
        <end position="41"/>
    </location>
</feature>
<feature type="zinc finger region" description="NR C4-type" evidence="1">
    <location>
        <begin position="57"/>
        <end position="86"/>
    </location>
</feature>
<feature type="region of interest" description="Disordered" evidence="2">
    <location>
        <begin position="331"/>
        <end position="398"/>
    </location>
</feature>
<feature type="compositionally biased region" description="Acidic residues" evidence="2">
    <location>
        <begin position="335"/>
        <end position="346"/>
    </location>
</feature>
<feature type="compositionally biased region" description="Low complexity" evidence="2">
    <location>
        <begin position="377"/>
        <end position="390"/>
    </location>
</feature>
<evidence type="ECO:0000255" key="1">
    <source>
        <dbReference type="PROSITE-ProRule" id="PRU00407"/>
    </source>
</evidence>
<evidence type="ECO:0000256" key="2">
    <source>
        <dbReference type="SAM" id="MobiDB-lite"/>
    </source>
</evidence>
<evidence type="ECO:0000269" key="3">
    <source>
    </source>
</evidence>
<evidence type="ECO:0000269" key="4">
    <source>
    </source>
</evidence>
<evidence type="ECO:0000269" key="5">
    <source>
    </source>
</evidence>
<evidence type="ECO:0000269" key="6">
    <source>
    </source>
</evidence>
<evidence type="ECO:0000269" key="7">
    <source>
    </source>
</evidence>
<evidence type="ECO:0000269" key="8">
    <source>
    </source>
</evidence>
<evidence type="ECO:0000305" key="9"/>
<comment type="function">
    <text evidence="3 4 5 6 7">Orphan nuclear receptor that binds DNA containing an extended core motif half-site sequence 5'-AAGTCA-3' (PubMed:18179707, PubMed:19906858). In males, plays an essential role in the migration of the linker cell which guides gonad elongation during the L3 and L4 stages of larval development by negatively regulating the expression of netrin receptor unc-5 at the mid-L3 stage (PubMed:19906858, PubMed:22363008). Involved in the regulation of non-apoptotic cell death in the linker cell, acting upstream of or in parallel to transcription factor hsf-1 (PubMed:27472063). Represses hypoxia response genes, fmo-2 and acs-2, in both normoxic and hypoxic conditions, probably acting via repression of nuclear receptor nhr-49 (PubMed:35285794).</text>
</comment>
<comment type="interaction">
    <interactant intactId="EBI-314697">
        <id>Q9XVV3</id>
    </interactant>
    <interactant intactId="EBI-314716">
        <id>O02482</id>
        <label>unc-37</label>
    </interactant>
    <organismsDiffer>false</organismsDiffer>
    <experiments>3</experiments>
</comment>
<comment type="subcellular location">
    <subcellularLocation>
        <location evidence="1">Nucleus</location>
    </subcellularLocation>
</comment>
<comment type="tissue specificity">
    <text evidence="4">Expressed in linker cell.</text>
</comment>
<comment type="disruption phenotype">
    <text evidence="4 6 7 8">RNAi-mediated knockdown in males prevents migration of the linker cell (LC) during larval development resulting in abnormal gonad migration (PubMed:19906858, PubMed:9851916). At the L3-to-L4 molt stage, the LC fails to reach the P7.p hypodermal cell and fails to perform the turn from the dorsal to the ventral side of the body. During the late L4 stage, the LC turns ventrally but stays farther behind its normal position (PubMed:19906858, PubMed:9851916). In addition, LC polarization, which normally occurs during the L3-L4 stages, is severely delayed and mig-2 polarization to the adherent side of thr LC is impaired (PubMed:19906858). In the LC, expression of unc-5 at the L3 and L4 larval stages is increased and expression of zmp-1 is absent at L4 stage (PubMed:19906858). Prevents non-apoptotic cell death in the LC (PubMed:27472063). Knockdown enhances LC survival on egl-20, eor-1, or lin-29 mutant backgrounds (PubMed:27472063). Causes precocious expression of let-70 in the LC during larval stage L3 (PubMed:27472063). RNAi-mediated knockdown in hermaphrodites causes no defect in distal tip cell migration (PubMed:19906858). RNAi mediated knockdown induces hypoxia response genes, fmo-2 and acs-2, in the absence and presence of hypoxia (PubMed:35285794). Reduces the survival rate of hypoxia-exposed embryos to 58% from 86% in wild-type animals (PubMed:35285794).</text>
</comment>
<comment type="similarity">
    <text evidence="9">Belongs to the nuclear hormone receptor family.</text>
</comment>
<accession>Q9XVV3</accession>
<name>NHR67_CAEEL</name>
<reference key="1">
    <citation type="journal article" date="1998" name="Science">
        <title>Genome sequence of the nematode C. elegans: a platform for investigating biology.</title>
        <authorList>
            <consortium name="The C. elegans sequencing consortium"/>
        </authorList>
    </citation>
    <scope>NUCLEOTIDE SEQUENCE [LARGE SCALE GENOMIC DNA]</scope>
    <source>
        <strain>Bristol N2</strain>
    </source>
</reference>
<reference key="2">
    <citation type="journal article" date="2008" name="BMC Mol. Biol.">
        <title>Specificity of DNA-binding by the FAX-1 and NHR-67 nuclear receptors of Caenorhabditis elegans is partially mediated via a subclass-specific P-box residue.</title>
        <authorList>
            <person name="DeMeo S.D."/>
            <person name="Lombel R.M."/>
            <person name="Cronin M."/>
            <person name="Smith E.L."/>
            <person name="Snowflack D.R."/>
            <person name="Reinert K."/>
            <person name="Clever S."/>
            <person name="Wightman B."/>
        </authorList>
    </citation>
    <scope>FUNCTION</scope>
</reference>
<reference key="3">
    <citation type="journal article" date="2009" name="Development">
        <title>The C. elegans tailless/Tlx homolog nhr-67 regulates a stage-specific program of linker cell migration in male gonadogenesis.</title>
        <authorList>
            <person name="Kato M."/>
            <person name="Sternberg P.W."/>
        </authorList>
    </citation>
    <scope>FUNCTION</scope>
    <scope>TISSUE SPECIFICITY</scope>
    <scope>DISRUPTION PHENOTYPE</scope>
</reference>
<reference key="4">
    <citation type="journal article" date="2012" name="Science">
        <title>Control of nonapoptotic developmental cell death in Caenorhabditis elegans by a polyglutamine-repeat protein.</title>
        <authorList>
            <person name="Blum E.S."/>
            <person name="Abraham M.C."/>
            <person name="Yoshimura S."/>
            <person name="Lu Y."/>
            <person name="Shaham S."/>
        </authorList>
    </citation>
    <scope>FUNCTION</scope>
    <scope>DISRUPTION PHENOTYPE</scope>
</reference>
<reference key="5">
    <citation type="journal article" date="2016" name="Cell Death Differ.">
        <title>Transcriptional control of non-apoptotic developmental cell death in C. elegans.</title>
        <authorList>
            <person name="Malin J.A."/>
            <person name="Kinet M.J."/>
            <person name="Abraham M.C."/>
            <person name="Blum E.S."/>
            <person name="Shaham S."/>
        </authorList>
    </citation>
    <scope>FUNCTION</scope>
    <scope>TISSUE SPECIFICITY</scope>
    <scope>DISRUPTION PHENOTYPE</scope>
</reference>
<reference evidence="9" key="6">
    <citation type="journal article" date="2022" name="Elife">
        <title>Nuclear hormone receptor NHR-49 acts in parallel with HIF-1 to promote hypoxia adaptation in Caenorhabditis elegans.</title>
        <authorList>
            <person name="Doering K.R.S."/>
            <person name="Cheng X."/>
            <person name="Milburn L."/>
            <person name="Ratnappan R."/>
            <person name="Ghazi A."/>
            <person name="Miller D.L."/>
            <person name="Taubert S."/>
        </authorList>
    </citation>
    <scope>FUNCTION</scope>
    <scope>DISRUPTION PHENOTYPE</scope>
</reference>
<gene>
    <name type="primary">nhr-67</name>
    <name type="ORF">C08F8.8</name>
</gene>